<gene>
    <name evidence="1" type="primary">ribH</name>
    <name type="ordered locus">CFF8240_1334</name>
</gene>
<comment type="function">
    <text evidence="1">Catalyzes the formation of 6,7-dimethyl-8-ribityllumazine by condensation of 5-amino-6-(D-ribitylamino)uracil with 3,4-dihydroxy-2-butanone 4-phosphate. This is the penultimate step in the biosynthesis of riboflavin.</text>
</comment>
<comment type="catalytic activity">
    <reaction evidence="1">
        <text>(2S)-2-hydroxy-3-oxobutyl phosphate + 5-amino-6-(D-ribitylamino)uracil = 6,7-dimethyl-8-(1-D-ribityl)lumazine + phosphate + 2 H2O + H(+)</text>
        <dbReference type="Rhea" id="RHEA:26152"/>
        <dbReference type="ChEBI" id="CHEBI:15377"/>
        <dbReference type="ChEBI" id="CHEBI:15378"/>
        <dbReference type="ChEBI" id="CHEBI:15934"/>
        <dbReference type="ChEBI" id="CHEBI:43474"/>
        <dbReference type="ChEBI" id="CHEBI:58201"/>
        <dbReference type="ChEBI" id="CHEBI:58830"/>
        <dbReference type="EC" id="2.5.1.78"/>
    </reaction>
</comment>
<comment type="pathway">
    <text evidence="1">Cofactor biosynthesis; riboflavin biosynthesis; riboflavin from 2-hydroxy-3-oxobutyl phosphate and 5-amino-6-(D-ribitylamino)uracil: step 1/2.</text>
</comment>
<comment type="similarity">
    <text evidence="1">Belongs to the DMRL synthase family.</text>
</comment>
<organism>
    <name type="scientific">Campylobacter fetus subsp. fetus (strain 82-40)</name>
    <dbReference type="NCBI Taxonomy" id="360106"/>
    <lineage>
        <taxon>Bacteria</taxon>
        <taxon>Pseudomonadati</taxon>
        <taxon>Campylobacterota</taxon>
        <taxon>Epsilonproteobacteria</taxon>
        <taxon>Campylobacterales</taxon>
        <taxon>Campylobacteraceae</taxon>
        <taxon>Campylobacter</taxon>
    </lineage>
</organism>
<accession>A0RQJ7</accession>
<sequence length="156" mass="16826">MNIIEGNLHLNGDEKVAIINGRFNHIITDRLVEGAKDAFLRHGGKEENLDLILVPGAFEIPMALEKVLSSGKWDAVCCVGAVIRGSTPHFDYVSAETTKGIANVTLKYGKPVTFGVLTVDSIEQAIERAGSKAGNKGFEAMTSVVELLNLYKNIKA</sequence>
<reference key="1">
    <citation type="submission" date="2006-11" db="EMBL/GenBank/DDBJ databases">
        <title>Sequence of Campylobacter fetus subsp. fetus 82-40.</title>
        <authorList>
            <person name="Fouts D.E."/>
            <person name="Nelson K.E."/>
        </authorList>
    </citation>
    <scope>NUCLEOTIDE SEQUENCE [LARGE SCALE GENOMIC DNA]</scope>
    <source>
        <strain>82-40</strain>
    </source>
</reference>
<keyword id="KW-0686">Riboflavin biosynthesis</keyword>
<keyword id="KW-0808">Transferase</keyword>
<name>RISB_CAMFF</name>
<protein>
    <recommendedName>
        <fullName evidence="1">6,7-dimethyl-8-ribityllumazine synthase</fullName>
        <shortName evidence="1">DMRL synthase</shortName>
        <shortName evidence="1">LS</shortName>
        <shortName evidence="1">Lumazine synthase</shortName>
        <ecNumber evidence="1">2.5.1.78</ecNumber>
    </recommendedName>
</protein>
<dbReference type="EC" id="2.5.1.78" evidence="1"/>
<dbReference type="EMBL" id="CP000487">
    <property type="protein sequence ID" value="ABK81798.1"/>
    <property type="molecule type" value="Genomic_DNA"/>
</dbReference>
<dbReference type="RefSeq" id="WP_002850139.1">
    <property type="nucleotide sequence ID" value="NC_008599.1"/>
</dbReference>
<dbReference type="SMR" id="A0RQJ7"/>
<dbReference type="GeneID" id="61065152"/>
<dbReference type="KEGG" id="cff:CFF8240_1334"/>
<dbReference type="eggNOG" id="COG0054">
    <property type="taxonomic scope" value="Bacteria"/>
</dbReference>
<dbReference type="HOGENOM" id="CLU_089358_1_1_7"/>
<dbReference type="UniPathway" id="UPA00275">
    <property type="reaction ID" value="UER00404"/>
</dbReference>
<dbReference type="Proteomes" id="UP000000760">
    <property type="component" value="Chromosome"/>
</dbReference>
<dbReference type="GO" id="GO:0005829">
    <property type="term" value="C:cytosol"/>
    <property type="evidence" value="ECO:0007669"/>
    <property type="project" value="TreeGrafter"/>
</dbReference>
<dbReference type="GO" id="GO:0009349">
    <property type="term" value="C:riboflavin synthase complex"/>
    <property type="evidence" value="ECO:0007669"/>
    <property type="project" value="InterPro"/>
</dbReference>
<dbReference type="GO" id="GO:0000906">
    <property type="term" value="F:6,7-dimethyl-8-ribityllumazine synthase activity"/>
    <property type="evidence" value="ECO:0007669"/>
    <property type="project" value="UniProtKB-UniRule"/>
</dbReference>
<dbReference type="GO" id="GO:0009231">
    <property type="term" value="P:riboflavin biosynthetic process"/>
    <property type="evidence" value="ECO:0007669"/>
    <property type="project" value="UniProtKB-UniRule"/>
</dbReference>
<dbReference type="CDD" id="cd09209">
    <property type="entry name" value="Lumazine_synthase-I"/>
    <property type="match status" value="1"/>
</dbReference>
<dbReference type="FunFam" id="3.40.50.960:FF:000001">
    <property type="entry name" value="6,7-dimethyl-8-ribityllumazine synthase"/>
    <property type="match status" value="1"/>
</dbReference>
<dbReference type="Gene3D" id="3.40.50.960">
    <property type="entry name" value="Lumazine/riboflavin synthase"/>
    <property type="match status" value="1"/>
</dbReference>
<dbReference type="HAMAP" id="MF_00178">
    <property type="entry name" value="Lumazine_synth"/>
    <property type="match status" value="1"/>
</dbReference>
<dbReference type="InterPro" id="IPR034964">
    <property type="entry name" value="LS"/>
</dbReference>
<dbReference type="InterPro" id="IPR002180">
    <property type="entry name" value="LS/RS"/>
</dbReference>
<dbReference type="InterPro" id="IPR036467">
    <property type="entry name" value="LS/RS_sf"/>
</dbReference>
<dbReference type="NCBIfam" id="TIGR00114">
    <property type="entry name" value="lumazine-synth"/>
    <property type="match status" value="1"/>
</dbReference>
<dbReference type="PANTHER" id="PTHR21058:SF0">
    <property type="entry name" value="6,7-DIMETHYL-8-RIBITYLLUMAZINE SYNTHASE"/>
    <property type="match status" value="1"/>
</dbReference>
<dbReference type="PANTHER" id="PTHR21058">
    <property type="entry name" value="6,7-DIMETHYL-8-RIBITYLLUMAZINE SYNTHASE DMRL SYNTHASE LUMAZINE SYNTHASE"/>
    <property type="match status" value="1"/>
</dbReference>
<dbReference type="Pfam" id="PF00885">
    <property type="entry name" value="DMRL_synthase"/>
    <property type="match status" value="1"/>
</dbReference>
<dbReference type="SUPFAM" id="SSF52121">
    <property type="entry name" value="Lumazine synthase"/>
    <property type="match status" value="1"/>
</dbReference>
<proteinExistence type="inferred from homology"/>
<evidence type="ECO:0000255" key="1">
    <source>
        <dbReference type="HAMAP-Rule" id="MF_00178"/>
    </source>
</evidence>
<feature type="chain" id="PRO_1000040389" description="6,7-dimethyl-8-ribityllumazine synthase">
    <location>
        <begin position="1"/>
        <end position="156"/>
    </location>
</feature>
<feature type="active site" description="Proton donor" evidence="1">
    <location>
        <position position="89"/>
    </location>
</feature>
<feature type="binding site" evidence="1">
    <location>
        <position position="23"/>
    </location>
    <ligand>
        <name>5-amino-6-(D-ribitylamino)uracil</name>
        <dbReference type="ChEBI" id="CHEBI:15934"/>
    </ligand>
</feature>
<feature type="binding site" evidence="1">
    <location>
        <begin position="57"/>
        <end position="59"/>
    </location>
    <ligand>
        <name>5-amino-6-(D-ribitylamino)uracil</name>
        <dbReference type="ChEBI" id="CHEBI:15934"/>
    </ligand>
</feature>
<feature type="binding site" evidence="1">
    <location>
        <begin position="81"/>
        <end position="83"/>
    </location>
    <ligand>
        <name>5-amino-6-(D-ribitylamino)uracil</name>
        <dbReference type="ChEBI" id="CHEBI:15934"/>
    </ligand>
</feature>
<feature type="binding site" evidence="1">
    <location>
        <begin position="86"/>
        <end position="87"/>
    </location>
    <ligand>
        <name>(2S)-2-hydroxy-3-oxobutyl phosphate</name>
        <dbReference type="ChEBI" id="CHEBI:58830"/>
    </ligand>
</feature>
<feature type="binding site" evidence="1">
    <location>
        <position position="114"/>
    </location>
    <ligand>
        <name>5-amino-6-(D-ribitylamino)uracil</name>
        <dbReference type="ChEBI" id="CHEBI:15934"/>
    </ligand>
</feature>
<feature type="binding site" evidence="1">
    <location>
        <position position="128"/>
    </location>
    <ligand>
        <name>(2S)-2-hydroxy-3-oxobutyl phosphate</name>
        <dbReference type="ChEBI" id="CHEBI:58830"/>
    </ligand>
</feature>